<accession>Q8N7S6</accession>
<dbReference type="EMBL" id="AK097724">
    <property type="protein sequence ID" value="BAC05151.1"/>
    <property type="molecule type" value="mRNA"/>
</dbReference>
<dbReference type="EMBL" id="AC134028">
    <property type="status" value="NOT_ANNOTATED_CDS"/>
    <property type="molecule type" value="Genomic_DNA"/>
</dbReference>
<dbReference type="RefSeq" id="NP_001116512.1">
    <property type="nucleotide sequence ID" value="NM_001123040.1"/>
</dbReference>
<dbReference type="BioGRID" id="571316">
    <property type="interactions" value="1"/>
</dbReference>
<dbReference type="IntAct" id="Q8N7S6">
    <property type="interactions" value="1"/>
</dbReference>
<dbReference type="GlyGen" id="Q8N7S6">
    <property type="glycosylation" value="1 site, 1 O-linked glycan (1 site)"/>
</dbReference>
<dbReference type="iPTMnet" id="Q8N7S6"/>
<dbReference type="PhosphoSitePlus" id="Q8N7S6"/>
<dbReference type="BioMuta" id="ARIH2OS"/>
<dbReference type="DMDM" id="74729269"/>
<dbReference type="PaxDb" id="9606-ENSP00000386193"/>
<dbReference type="ProteomicsDB" id="72326"/>
<dbReference type="UCSC" id="uc010hkk.1">
    <property type="organism name" value="human"/>
</dbReference>
<dbReference type="AGR" id="HGNC:34425"/>
<dbReference type="GeneCards" id="ARIH2OS"/>
<dbReference type="HGNC" id="HGNC:34425">
    <property type="gene designation" value="ARIH2OS"/>
</dbReference>
<dbReference type="neXtProt" id="NX_Q8N7S6"/>
<dbReference type="PharmGKB" id="PA162379716"/>
<dbReference type="eggNOG" id="ENOG502T3YZ">
    <property type="taxonomic scope" value="Eukaryota"/>
</dbReference>
<dbReference type="HOGENOM" id="CLU_090206_0_0_1"/>
<dbReference type="InParanoid" id="Q8N7S6"/>
<dbReference type="PAN-GO" id="Q8N7S6">
    <property type="GO annotations" value="0 GO annotations based on evolutionary models"/>
</dbReference>
<dbReference type="PhylomeDB" id="Q8N7S6"/>
<dbReference type="TreeFam" id="TF341624"/>
<dbReference type="PathwayCommons" id="Q8N7S6"/>
<dbReference type="SignaLink" id="Q8N7S6"/>
<dbReference type="BioGRID-ORCS" id="646450">
    <property type="hits" value="20 hits in 1154 CRISPR screens"/>
</dbReference>
<dbReference type="GenomeRNAi" id="646450"/>
<dbReference type="Pharos" id="Q8N7S6">
    <property type="development level" value="Tdark"/>
</dbReference>
<dbReference type="PRO" id="PR:Q8N7S6"/>
<dbReference type="Proteomes" id="UP000005640">
    <property type="component" value="Chromosome 3"/>
</dbReference>
<dbReference type="RNAct" id="Q8N7S6">
    <property type="molecule type" value="protein"/>
</dbReference>
<dbReference type="GO" id="GO:0016020">
    <property type="term" value="C:membrane"/>
    <property type="evidence" value="ECO:0007669"/>
    <property type="project" value="UniProtKB-SubCell"/>
</dbReference>
<reference key="1">
    <citation type="journal article" date="2004" name="Nat. Genet.">
        <title>Complete sequencing and characterization of 21,243 full-length human cDNAs.</title>
        <authorList>
            <person name="Ota T."/>
            <person name="Suzuki Y."/>
            <person name="Nishikawa T."/>
            <person name="Otsuki T."/>
            <person name="Sugiyama T."/>
            <person name="Irie R."/>
            <person name="Wakamatsu A."/>
            <person name="Hayashi K."/>
            <person name="Sato H."/>
            <person name="Nagai K."/>
            <person name="Kimura K."/>
            <person name="Makita H."/>
            <person name="Sekine M."/>
            <person name="Obayashi M."/>
            <person name="Nishi T."/>
            <person name="Shibahara T."/>
            <person name="Tanaka T."/>
            <person name="Ishii S."/>
            <person name="Yamamoto J."/>
            <person name="Saito K."/>
            <person name="Kawai Y."/>
            <person name="Isono Y."/>
            <person name="Nakamura Y."/>
            <person name="Nagahari K."/>
            <person name="Murakami K."/>
            <person name="Yasuda T."/>
            <person name="Iwayanagi T."/>
            <person name="Wagatsuma M."/>
            <person name="Shiratori A."/>
            <person name="Sudo H."/>
            <person name="Hosoiri T."/>
            <person name="Kaku Y."/>
            <person name="Kodaira H."/>
            <person name="Kondo H."/>
            <person name="Sugawara M."/>
            <person name="Takahashi M."/>
            <person name="Kanda K."/>
            <person name="Yokoi T."/>
            <person name="Furuya T."/>
            <person name="Kikkawa E."/>
            <person name="Omura Y."/>
            <person name="Abe K."/>
            <person name="Kamihara K."/>
            <person name="Katsuta N."/>
            <person name="Sato K."/>
            <person name="Tanikawa M."/>
            <person name="Yamazaki M."/>
            <person name="Ninomiya K."/>
            <person name="Ishibashi T."/>
            <person name="Yamashita H."/>
            <person name="Murakawa K."/>
            <person name="Fujimori K."/>
            <person name="Tanai H."/>
            <person name="Kimata M."/>
            <person name="Watanabe M."/>
            <person name="Hiraoka S."/>
            <person name="Chiba Y."/>
            <person name="Ishida S."/>
            <person name="Ono Y."/>
            <person name="Takiguchi S."/>
            <person name="Watanabe S."/>
            <person name="Yosida M."/>
            <person name="Hotuta T."/>
            <person name="Kusano J."/>
            <person name="Kanehori K."/>
            <person name="Takahashi-Fujii A."/>
            <person name="Hara H."/>
            <person name="Tanase T.-O."/>
            <person name="Nomura Y."/>
            <person name="Togiya S."/>
            <person name="Komai F."/>
            <person name="Hara R."/>
            <person name="Takeuchi K."/>
            <person name="Arita M."/>
            <person name="Imose N."/>
            <person name="Musashino K."/>
            <person name="Yuuki H."/>
            <person name="Oshima A."/>
            <person name="Sasaki N."/>
            <person name="Aotsuka S."/>
            <person name="Yoshikawa Y."/>
            <person name="Matsunawa H."/>
            <person name="Ichihara T."/>
            <person name="Shiohata N."/>
            <person name="Sano S."/>
            <person name="Moriya S."/>
            <person name="Momiyama H."/>
            <person name="Satoh N."/>
            <person name="Takami S."/>
            <person name="Terashima Y."/>
            <person name="Suzuki O."/>
            <person name="Nakagawa S."/>
            <person name="Senoh A."/>
            <person name="Mizoguchi H."/>
            <person name="Goto Y."/>
            <person name="Shimizu F."/>
            <person name="Wakebe H."/>
            <person name="Hishigaki H."/>
            <person name="Watanabe T."/>
            <person name="Sugiyama A."/>
            <person name="Takemoto M."/>
            <person name="Kawakami B."/>
            <person name="Yamazaki M."/>
            <person name="Watanabe K."/>
            <person name="Kumagai A."/>
            <person name="Itakura S."/>
            <person name="Fukuzumi Y."/>
            <person name="Fujimori Y."/>
            <person name="Komiyama M."/>
            <person name="Tashiro H."/>
            <person name="Tanigami A."/>
            <person name="Fujiwara T."/>
            <person name="Ono T."/>
            <person name="Yamada K."/>
            <person name="Fujii Y."/>
            <person name="Ozaki K."/>
            <person name="Hirao M."/>
            <person name="Ohmori Y."/>
            <person name="Kawabata A."/>
            <person name="Hikiji T."/>
            <person name="Kobatake N."/>
            <person name="Inagaki H."/>
            <person name="Ikema Y."/>
            <person name="Okamoto S."/>
            <person name="Okitani R."/>
            <person name="Kawakami T."/>
            <person name="Noguchi S."/>
            <person name="Itoh T."/>
            <person name="Shigeta K."/>
            <person name="Senba T."/>
            <person name="Matsumura K."/>
            <person name="Nakajima Y."/>
            <person name="Mizuno T."/>
            <person name="Morinaga M."/>
            <person name="Sasaki M."/>
            <person name="Togashi T."/>
            <person name="Oyama M."/>
            <person name="Hata H."/>
            <person name="Watanabe M."/>
            <person name="Komatsu T."/>
            <person name="Mizushima-Sugano J."/>
            <person name="Satoh T."/>
            <person name="Shirai Y."/>
            <person name="Takahashi Y."/>
            <person name="Nakagawa K."/>
            <person name="Okumura K."/>
            <person name="Nagase T."/>
            <person name="Nomura N."/>
            <person name="Kikuchi H."/>
            <person name="Masuho Y."/>
            <person name="Yamashita R."/>
            <person name="Nakai K."/>
            <person name="Yada T."/>
            <person name="Nakamura Y."/>
            <person name="Ohara O."/>
            <person name="Isogai T."/>
            <person name="Sugano S."/>
        </authorList>
    </citation>
    <scope>NUCLEOTIDE SEQUENCE [LARGE SCALE MRNA]</scope>
    <source>
        <tissue>Testis</tissue>
    </source>
</reference>
<reference key="2">
    <citation type="journal article" date="2006" name="Nature">
        <title>The DNA sequence, annotation and analysis of human chromosome 3.</title>
        <authorList>
            <person name="Muzny D.M."/>
            <person name="Scherer S.E."/>
            <person name="Kaul R."/>
            <person name="Wang J."/>
            <person name="Yu J."/>
            <person name="Sudbrak R."/>
            <person name="Buhay C.J."/>
            <person name="Chen R."/>
            <person name="Cree A."/>
            <person name="Ding Y."/>
            <person name="Dugan-Rocha S."/>
            <person name="Gill R."/>
            <person name="Gunaratne P."/>
            <person name="Harris R.A."/>
            <person name="Hawes A.C."/>
            <person name="Hernandez J."/>
            <person name="Hodgson A.V."/>
            <person name="Hume J."/>
            <person name="Jackson A."/>
            <person name="Khan Z.M."/>
            <person name="Kovar-Smith C."/>
            <person name="Lewis L.R."/>
            <person name="Lozado R.J."/>
            <person name="Metzker M.L."/>
            <person name="Milosavljevic A."/>
            <person name="Miner G.R."/>
            <person name="Morgan M.B."/>
            <person name="Nazareth L.V."/>
            <person name="Scott G."/>
            <person name="Sodergren E."/>
            <person name="Song X.-Z."/>
            <person name="Steffen D."/>
            <person name="Wei S."/>
            <person name="Wheeler D.A."/>
            <person name="Wright M.W."/>
            <person name="Worley K.C."/>
            <person name="Yuan Y."/>
            <person name="Zhang Z."/>
            <person name="Adams C.Q."/>
            <person name="Ansari-Lari M.A."/>
            <person name="Ayele M."/>
            <person name="Brown M.J."/>
            <person name="Chen G."/>
            <person name="Chen Z."/>
            <person name="Clendenning J."/>
            <person name="Clerc-Blankenburg K.P."/>
            <person name="Chen R."/>
            <person name="Chen Z."/>
            <person name="Davis C."/>
            <person name="Delgado O."/>
            <person name="Dinh H.H."/>
            <person name="Dong W."/>
            <person name="Draper H."/>
            <person name="Ernst S."/>
            <person name="Fu G."/>
            <person name="Gonzalez-Garay M.L."/>
            <person name="Garcia D.K."/>
            <person name="Gillett W."/>
            <person name="Gu J."/>
            <person name="Hao B."/>
            <person name="Haugen E."/>
            <person name="Havlak P."/>
            <person name="He X."/>
            <person name="Hennig S."/>
            <person name="Hu S."/>
            <person name="Huang W."/>
            <person name="Jackson L.R."/>
            <person name="Jacob L.S."/>
            <person name="Kelly S.H."/>
            <person name="Kube M."/>
            <person name="Levy R."/>
            <person name="Li Z."/>
            <person name="Liu B."/>
            <person name="Liu J."/>
            <person name="Liu W."/>
            <person name="Lu J."/>
            <person name="Maheshwari M."/>
            <person name="Nguyen B.-V."/>
            <person name="Okwuonu G.O."/>
            <person name="Palmeiri A."/>
            <person name="Pasternak S."/>
            <person name="Perez L.M."/>
            <person name="Phelps K.A."/>
            <person name="Plopper F.J."/>
            <person name="Qiang B."/>
            <person name="Raymond C."/>
            <person name="Rodriguez R."/>
            <person name="Saenphimmachak C."/>
            <person name="Santibanez J."/>
            <person name="Shen H."/>
            <person name="Shen Y."/>
            <person name="Subramanian S."/>
            <person name="Tabor P.E."/>
            <person name="Verduzco D."/>
            <person name="Waldron L."/>
            <person name="Wang J."/>
            <person name="Wang J."/>
            <person name="Wang Q."/>
            <person name="Williams G.A."/>
            <person name="Wong G.K.-S."/>
            <person name="Yao Z."/>
            <person name="Zhang J."/>
            <person name="Zhang X."/>
            <person name="Zhao G."/>
            <person name="Zhou J."/>
            <person name="Zhou Y."/>
            <person name="Nelson D."/>
            <person name="Lehrach H."/>
            <person name="Reinhardt R."/>
            <person name="Naylor S.L."/>
            <person name="Yang H."/>
            <person name="Olson M."/>
            <person name="Weinstock G."/>
            <person name="Gibbs R.A."/>
        </authorList>
    </citation>
    <scope>NUCLEOTIDE SEQUENCE [LARGE SCALE GENOMIC DNA]</scope>
</reference>
<keyword id="KW-0472">Membrane</keyword>
<keyword id="KW-1185">Reference proteome</keyword>
<keyword id="KW-0812">Transmembrane</keyword>
<keyword id="KW-1133">Transmembrane helix</keyword>
<name>ARI2O_HUMAN</name>
<comment type="subcellular location">
    <subcellularLocation>
        <location evidence="3">Membrane</location>
        <topology evidence="3">Single-pass membrane protein</topology>
    </subcellularLocation>
</comment>
<protein>
    <recommendedName>
        <fullName>Uncharacterized protein ARIH2OS</fullName>
    </recommendedName>
    <alternativeName>
        <fullName>Ariadne-2 homolog opposite strand protein</fullName>
    </alternativeName>
</protein>
<sequence>MLGQRAGDGERPGLPGDGEGGVPARPGRRAERPPQRPAKVNKAVTCAAHLPGAAASRPLSPNKPDRVRPGQRDRIGAKRQRRRRADAGQARAASSRRVVPTAPEVLGAVASLPDRGRPTVARVATGSRLEGLFSAASLKLSALTQSLTRVRQAPTASGATIRLPASPVEMFLTSAFLTGFSFHCLYSGIGHGEDILASVEQITIVSRPLSGQRGAGPGNSAYTPRRSQGGPRAATTPGFRFPCRGLVRRAVLRLTVTVQDCILTALLAVSFHSIGVVIMTSSYLLGPVVK</sequence>
<feature type="chain" id="PRO_0000348443" description="Uncharacterized protein ARIH2OS">
    <location>
        <begin position="1"/>
        <end position="290"/>
    </location>
</feature>
<feature type="transmembrane region" description="Helical" evidence="1">
    <location>
        <begin position="261"/>
        <end position="281"/>
    </location>
</feature>
<feature type="region of interest" description="Disordered" evidence="2">
    <location>
        <begin position="1"/>
        <end position="98"/>
    </location>
</feature>
<feature type="region of interest" description="Disordered" evidence="2">
    <location>
        <begin position="209"/>
        <end position="236"/>
    </location>
</feature>
<feature type="compositionally biased region" description="Basic and acidic residues" evidence="2">
    <location>
        <begin position="63"/>
        <end position="76"/>
    </location>
</feature>
<feature type="compositionally biased region" description="Low complexity" evidence="2">
    <location>
        <begin position="87"/>
        <end position="97"/>
    </location>
</feature>
<evidence type="ECO:0000255" key="1"/>
<evidence type="ECO:0000256" key="2">
    <source>
        <dbReference type="SAM" id="MobiDB-lite"/>
    </source>
</evidence>
<evidence type="ECO:0000305" key="3"/>
<organism>
    <name type="scientific">Homo sapiens</name>
    <name type="common">Human</name>
    <dbReference type="NCBI Taxonomy" id="9606"/>
    <lineage>
        <taxon>Eukaryota</taxon>
        <taxon>Metazoa</taxon>
        <taxon>Chordata</taxon>
        <taxon>Craniata</taxon>
        <taxon>Vertebrata</taxon>
        <taxon>Euteleostomi</taxon>
        <taxon>Mammalia</taxon>
        <taxon>Eutheria</taxon>
        <taxon>Euarchontoglires</taxon>
        <taxon>Primates</taxon>
        <taxon>Haplorrhini</taxon>
        <taxon>Catarrhini</taxon>
        <taxon>Hominidae</taxon>
        <taxon>Homo</taxon>
    </lineage>
</organism>
<proteinExistence type="evidence at transcript level"/>
<gene>
    <name type="primary">ARIH2OS</name>
    <name type="synonym">C3orf71</name>
</gene>